<protein>
    <recommendedName>
        <fullName evidence="1">Putative double-stranded DNA mimic protein YciU</fullName>
    </recommendedName>
</protein>
<sequence length="109" mass="12687">MDMDLNNRLTEDETLEQAYDIFLELAADNLDPADVLLFNLQFEERGGAELFDPAEDWQEHVDFDLNPDFFAEVVIGLADSEDGEINDVFARILLCREKDHKLCHIIWRE</sequence>
<accession>C4ZTU0</accession>
<evidence type="ECO:0000255" key="1">
    <source>
        <dbReference type="HAMAP-Rule" id="MF_00680"/>
    </source>
</evidence>
<proteinExistence type="inferred from homology"/>
<feature type="chain" id="PRO_1000212536" description="Putative double-stranded DNA mimic protein YciU">
    <location>
        <begin position="1"/>
        <end position="109"/>
    </location>
</feature>
<reference key="1">
    <citation type="journal article" date="2009" name="J. Bacteriol.">
        <title>Genomic sequencing reveals regulatory mutations and recombinational events in the widely used MC4100 lineage of Escherichia coli K-12.</title>
        <authorList>
            <person name="Ferenci T."/>
            <person name="Zhou Z."/>
            <person name="Betteridge T."/>
            <person name="Ren Y."/>
            <person name="Liu Y."/>
            <person name="Feng L."/>
            <person name="Reeves P.R."/>
            <person name="Wang L."/>
        </authorList>
    </citation>
    <scope>NUCLEOTIDE SEQUENCE [LARGE SCALE GENOMIC DNA]</scope>
    <source>
        <strain>K12 / MC4100 / BW2952</strain>
    </source>
</reference>
<gene>
    <name evidence="1" type="primary">yciU</name>
    <name type="ordered locus">BWG_1076</name>
</gene>
<organism>
    <name type="scientific">Escherichia coli (strain K12 / MC4100 / BW2952)</name>
    <dbReference type="NCBI Taxonomy" id="595496"/>
    <lineage>
        <taxon>Bacteria</taxon>
        <taxon>Pseudomonadati</taxon>
        <taxon>Pseudomonadota</taxon>
        <taxon>Gammaproteobacteria</taxon>
        <taxon>Enterobacterales</taxon>
        <taxon>Enterobacteriaceae</taxon>
        <taxon>Escherichia</taxon>
    </lineage>
</organism>
<dbReference type="EMBL" id="CP001396">
    <property type="protein sequence ID" value="ACR64865.1"/>
    <property type="molecule type" value="Genomic_DNA"/>
</dbReference>
<dbReference type="RefSeq" id="WP_000366959.1">
    <property type="nucleotide sequence ID" value="NC_012759.1"/>
</dbReference>
<dbReference type="SMR" id="C4ZTU0"/>
<dbReference type="KEGG" id="ebw:BWG_1076"/>
<dbReference type="HOGENOM" id="CLU_143392_0_0_6"/>
<dbReference type="Gene3D" id="3.10.450.140">
    <property type="entry name" value="dsDNA mimic, putative"/>
    <property type="match status" value="1"/>
</dbReference>
<dbReference type="HAMAP" id="MF_00680">
    <property type="entry name" value="Put_dsDNA_mimic"/>
    <property type="match status" value="1"/>
</dbReference>
<dbReference type="InterPro" id="IPR007376">
    <property type="entry name" value="dsDNA_mimic_put"/>
</dbReference>
<dbReference type="InterPro" id="IPR036763">
    <property type="entry name" value="Put_dsDNA_mimic_sf"/>
</dbReference>
<dbReference type="NCBIfam" id="NF003469">
    <property type="entry name" value="PRK05094.1"/>
    <property type="match status" value="1"/>
</dbReference>
<dbReference type="Pfam" id="PF04269">
    <property type="entry name" value="DUF440"/>
    <property type="match status" value="1"/>
</dbReference>
<dbReference type="PIRSF" id="PIRSF004916">
    <property type="entry name" value="UCP004916"/>
    <property type="match status" value="1"/>
</dbReference>
<dbReference type="SUPFAM" id="SSF102816">
    <property type="entry name" value="Putative dsDNA mimic"/>
    <property type="match status" value="1"/>
</dbReference>
<comment type="function">
    <text evidence="1">May act as a double-stranded DNA (dsDNA) mimic. Probably regulates the activity of a dsDNA-binding protein.</text>
</comment>
<comment type="similarity">
    <text evidence="1">Belongs to the putative dsDNA mimic protein family.</text>
</comment>
<name>YCIU_ECOBW</name>